<keyword id="KW-0002">3D-structure</keyword>
<keyword id="KW-0963">Cytoplasm</keyword>
<keyword id="KW-0378">Hydrolase</keyword>
<keyword id="KW-0479">Metal-binding</keyword>
<keyword id="KW-0547">Nucleotide-binding</keyword>
<keyword id="KW-1185">Reference proteome</keyword>
<accession>P66881</accession>
<accession>Q8XFG4</accession>
<comment type="function">
    <text evidence="1">Nucleotidase with a broad substrate specificity as it can dephosphorylate various ribo- and deoxyribonucleoside 5'-monophosphates and ribonucleoside 3'-monophosphates with highest affinity to 3'-AMP. Also hydrolyzes polyphosphate (exopolyphosphatase activity) with the preference for short-chain-length substrates (P20-25). Might be involved in the regulation of dNTP and NTP pools, and in the turnover of 3'-mononucleotides produced by numerous intracellular RNases (T1, T2, and F) during the degradation of various RNAs.</text>
</comment>
<comment type="catalytic activity">
    <reaction evidence="1">
        <text>a ribonucleoside 5'-phosphate + H2O = a ribonucleoside + phosphate</text>
        <dbReference type="Rhea" id="RHEA:12484"/>
        <dbReference type="ChEBI" id="CHEBI:15377"/>
        <dbReference type="ChEBI" id="CHEBI:18254"/>
        <dbReference type="ChEBI" id="CHEBI:43474"/>
        <dbReference type="ChEBI" id="CHEBI:58043"/>
        <dbReference type="EC" id="3.1.3.5"/>
    </reaction>
</comment>
<comment type="catalytic activity">
    <reaction evidence="1">
        <text>a ribonucleoside 3'-phosphate + H2O = a ribonucleoside + phosphate</text>
        <dbReference type="Rhea" id="RHEA:10144"/>
        <dbReference type="ChEBI" id="CHEBI:13197"/>
        <dbReference type="ChEBI" id="CHEBI:15377"/>
        <dbReference type="ChEBI" id="CHEBI:18254"/>
        <dbReference type="ChEBI" id="CHEBI:43474"/>
        <dbReference type="EC" id="3.1.3.6"/>
    </reaction>
</comment>
<comment type="catalytic activity">
    <reaction evidence="1">
        <text>[phosphate](n) + H2O = [phosphate](n-1) + phosphate + H(+)</text>
        <dbReference type="Rhea" id="RHEA:21528"/>
        <dbReference type="Rhea" id="RHEA-COMP:9859"/>
        <dbReference type="Rhea" id="RHEA-COMP:14279"/>
        <dbReference type="ChEBI" id="CHEBI:15377"/>
        <dbReference type="ChEBI" id="CHEBI:15378"/>
        <dbReference type="ChEBI" id="CHEBI:16838"/>
        <dbReference type="ChEBI" id="CHEBI:43474"/>
        <dbReference type="EC" id="3.6.1.11"/>
    </reaction>
</comment>
<comment type="cofactor">
    <cofactor evidence="1">
        <name>a divalent metal cation</name>
        <dbReference type="ChEBI" id="CHEBI:60240"/>
    </cofactor>
    <text evidence="1">Binds 1 divalent metal cation per subunit.</text>
</comment>
<comment type="subcellular location">
    <subcellularLocation>
        <location evidence="1">Cytoplasm</location>
    </subcellularLocation>
</comment>
<comment type="similarity">
    <text evidence="1">Belongs to the SurE nucleotidase family.</text>
</comment>
<proteinExistence type="evidence at protein level"/>
<feature type="chain" id="PRO_0000111839" description="5'/3'-nucleotidase SurE">
    <location>
        <begin position="1"/>
        <end position="253"/>
    </location>
</feature>
<feature type="binding site" evidence="1">
    <location>
        <position position="8"/>
    </location>
    <ligand>
        <name>a divalent metal cation</name>
        <dbReference type="ChEBI" id="CHEBI:60240"/>
    </ligand>
</feature>
<feature type="binding site" evidence="1">
    <location>
        <position position="9"/>
    </location>
    <ligand>
        <name>a divalent metal cation</name>
        <dbReference type="ChEBI" id="CHEBI:60240"/>
    </ligand>
</feature>
<feature type="binding site" evidence="1">
    <location>
        <position position="39"/>
    </location>
    <ligand>
        <name>a divalent metal cation</name>
        <dbReference type="ChEBI" id="CHEBI:60240"/>
    </ligand>
</feature>
<feature type="binding site" evidence="1">
    <location>
        <position position="92"/>
    </location>
    <ligand>
        <name>a divalent metal cation</name>
        <dbReference type="ChEBI" id="CHEBI:60240"/>
    </ligand>
</feature>
<feature type="strand" evidence="3">
    <location>
        <begin position="2"/>
        <end position="6"/>
    </location>
</feature>
<feature type="helix" evidence="3">
    <location>
        <begin position="14"/>
        <end position="24"/>
    </location>
</feature>
<feature type="strand" evidence="3">
    <location>
        <begin position="27"/>
        <end position="36"/>
    </location>
</feature>
<feature type="strand" evidence="3">
    <location>
        <begin position="53"/>
        <end position="55"/>
    </location>
</feature>
<feature type="strand" evidence="3">
    <location>
        <begin position="61"/>
        <end position="63"/>
    </location>
</feature>
<feature type="helix" evidence="3">
    <location>
        <begin position="68"/>
        <end position="77"/>
    </location>
</feature>
<feature type="strand" evidence="2">
    <location>
        <begin position="80"/>
        <end position="82"/>
    </location>
</feature>
<feature type="strand" evidence="3">
    <location>
        <begin position="85"/>
        <end position="94"/>
    </location>
</feature>
<feature type="helix" evidence="3">
    <location>
        <begin position="98"/>
        <end position="103"/>
    </location>
</feature>
<feature type="helix" evidence="3">
    <location>
        <begin position="105"/>
        <end position="111"/>
    </location>
</feature>
<feature type="turn" evidence="3">
    <location>
        <begin position="112"/>
        <end position="115"/>
    </location>
</feature>
<feature type="strand" evidence="3">
    <location>
        <begin position="116"/>
        <end position="118"/>
    </location>
</feature>
<feature type="strand" evidence="3">
    <location>
        <begin position="120"/>
        <end position="129"/>
    </location>
</feature>
<feature type="helix" evidence="3">
    <location>
        <begin position="131"/>
        <end position="147"/>
    </location>
</feature>
<feature type="strand" evidence="3">
    <location>
        <begin position="154"/>
        <end position="160"/>
    </location>
</feature>
<feature type="helix" evidence="3">
    <location>
        <begin position="165"/>
        <end position="167"/>
    </location>
</feature>
<feature type="strand" evidence="3">
    <location>
        <begin position="171"/>
        <end position="173"/>
    </location>
</feature>
<feature type="strand" evidence="2">
    <location>
        <begin position="178"/>
        <end position="180"/>
    </location>
</feature>
<feature type="strand" evidence="3">
    <location>
        <begin position="185"/>
        <end position="189"/>
    </location>
</feature>
<feature type="strand" evidence="3">
    <location>
        <begin position="195"/>
        <end position="199"/>
    </location>
</feature>
<feature type="strand" evidence="3">
    <location>
        <begin position="205"/>
        <end position="207"/>
    </location>
</feature>
<feature type="helix" evidence="3">
    <location>
        <begin position="213"/>
        <end position="218"/>
    </location>
</feature>
<feature type="strand" evidence="3">
    <location>
        <begin position="222"/>
        <end position="227"/>
    </location>
</feature>
<feature type="helix" evidence="3">
    <location>
        <begin position="234"/>
        <end position="236"/>
    </location>
</feature>
<feature type="helix" evidence="3">
    <location>
        <begin position="237"/>
        <end position="247"/>
    </location>
</feature>
<feature type="strand" evidence="4">
    <location>
        <begin position="249"/>
        <end position="251"/>
    </location>
</feature>
<dbReference type="EC" id="3.1.3.5" evidence="1"/>
<dbReference type="EC" id="3.1.3.6" evidence="1"/>
<dbReference type="EC" id="3.6.1.11" evidence="1"/>
<dbReference type="EMBL" id="AE006468">
    <property type="protein sequence ID" value="AAL21807.1"/>
    <property type="molecule type" value="Genomic_DNA"/>
</dbReference>
<dbReference type="RefSeq" id="NP_461848.1">
    <property type="nucleotide sequence ID" value="NC_003197.2"/>
</dbReference>
<dbReference type="RefSeq" id="WP_001221538.1">
    <property type="nucleotide sequence ID" value="NC_003197.2"/>
</dbReference>
<dbReference type="PDB" id="2V4N">
    <property type="method" value="X-ray"/>
    <property type="resolution" value="1.70 A"/>
    <property type="chains" value="A=1-253"/>
</dbReference>
<dbReference type="PDB" id="2V4O">
    <property type="method" value="X-ray"/>
    <property type="resolution" value="2.71 A"/>
    <property type="chains" value="A/B/C/D=1-253"/>
</dbReference>
<dbReference type="PDB" id="4G9O">
    <property type="method" value="X-ray"/>
    <property type="resolution" value="2.12 A"/>
    <property type="chains" value="A/B=1-253"/>
</dbReference>
<dbReference type="PDB" id="4GAD">
    <property type="method" value="X-ray"/>
    <property type="resolution" value="2.35 A"/>
    <property type="chains" value="A/B=1-253"/>
</dbReference>
<dbReference type="PDB" id="4RYT">
    <property type="method" value="X-ray"/>
    <property type="resolution" value="2.09 A"/>
    <property type="chains" value="A=1-253"/>
</dbReference>
<dbReference type="PDB" id="4RYU">
    <property type="method" value="X-ray"/>
    <property type="resolution" value="2.04 A"/>
    <property type="chains" value="A/B/C/D=1-253"/>
</dbReference>
<dbReference type="PDB" id="4XEP">
    <property type="method" value="X-ray"/>
    <property type="resolution" value="1.50 A"/>
    <property type="chains" value="A=1-253"/>
</dbReference>
<dbReference type="PDB" id="4XER">
    <property type="method" value="X-ray"/>
    <property type="resolution" value="1.97 A"/>
    <property type="chains" value="A/B/C/D=1-253"/>
</dbReference>
<dbReference type="PDB" id="4XGB">
    <property type="method" value="X-ray"/>
    <property type="resolution" value="2.23 A"/>
    <property type="chains" value="A/B/C/D=1-253"/>
</dbReference>
<dbReference type="PDB" id="4XGP">
    <property type="method" value="X-ray"/>
    <property type="resolution" value="1.90 A"/>
    <property type="chains" value="A/B/C/D=1-253"/>
</dbReference>
<dbReference type="PDB" id="4XH8">
    <property type="method" value="X-ray"/>
    <property type="resolution" value="3.56 A"/>
    <property type="chains" value="A/B=1-253"/>
</dbReference>
<dbReference type="PDB" id="4XJ7">
    <property type="method" value="X-ray"/>
    <property type="resolution" value="1.60 A"/>
    <property type="chains" value="A/B/C/D=1-253"/>
</dbReference>
<dbReference type="PDBsum" id="2V4N"/>
<dbReference type="PDBsum" id="2V4O"/>
<dbReference type="PDBsum" id="4G9O"/>
<dbReference type="PDBsum" id="4GAD"/>
<dbReference type="PDBsum" id="4RYT"/>
<dbReference type="PDBsum" id="4RYU"/>
<dbReference type="PDBsum" id="4XEP"/>
<dbReference type="PDBsum" id="4XER"/>
<dbReference type="PDBsum" id="4XGB"/>
<dbReference type="PDBsum" id="4XGP"/>
<dbReference type="PDBsum" id="4XH8"/>
<dbReference type="PDBsum" id="4XJ7"/>
<dbReference type="SMR" id="P66881"/>
<dbReference type="STRING" id="99287.STM2927"/>
<dbReference type="PaxDb" id="99287-STM2927"/>
<dbReference type="GeneID" id="1254450"/>
<dbReference type="KEGG" id="stm:STM2927"/>
<dbReference type="PATRIC" id="fig|99287.12.peg.3081"/>
<dbReference type="HOGENOM" id="CLU_045192_1_2_6"/>
<dbReference type="OMA" id="DCVHIAL"/>
<dbReference type="PhylomeDB" id="P66881"/>
<dbReference type="BioCyc" id="SENT99287:STM2927-MONOMER"/>
<dbReference type="EvolutionaryTrace" id="P66881"/>
<dbReference type="Proteomes" id="UP000001014">
    <property type="component" value="Chromosome"/>
</dbReference>
<dbReference type="GO" id="GO:0005737">
    <property type="term" value="C:cytoplasm"/>
    <property type="evidence" value="ECO:0007669"/>
    <property type="project" value="UniProtKB-SubCell"/>
</dbReference>
<dbReference type="GO" id="GO:0008254">
    <property type="term" value="F:3'-nucleotidase activity"/>
    <property type="evidence" value="ECO:0000318"/>
    <property type="project" value="GO_Central"/>
</dbReference>
<dbReference type="GO" id="GO:0008253">
    <property type="term" value="F:5'-nucleotidase activity"/>
    <property type="evidence" value="ECO:0000318"/>
    <property type="project" value="GO_Central"/>
</dbReference>
<dbReference type="GO" id="GO:0004309">
    <property type="term" value="F:exopolyphosphatase activity"/>
    <property type="evidence" value="ECO:0000318"/>
    <property type="project" value="GO_Central"/>
</dbReference>
<dbReference type="GO" id="GO:0046872">
    <property type="term" value="F:metal ion binding"/>
    <property type="evidence" value="ECO:0007669"/>
    <property type="project" value="UniProtKB-UniRule"/>
</dbReference>
<dbReference type="GO" id="GO:0000166">
    <property type="term" value="F:nucleotide binding"/>
    <property type="evidence" value="ECO:0007669"/>
    <property type="project" value="UniProtKB-KW"/>
</dbReference>
<dbReference type="FunFam" id="3.40.1210.10:FF:000001">
    <property type="entry name" value="5'/3'-nucleotidase SurE"/>
    <property type="match status" value="1"/>
</dbReference>
<dbReference type="Gene3D" id="3.40.1210.10">
    <property type="entry name" value="Survival protein SurE-like phosphatase/nucleotidase"/>
    <property type="match status" value="1"/>
</dbReference>
<dbReference type="HAMAP" id="MF_00060">
    <property type="entry name" value="SurE"/>
    <property type="match status" value="1"/>
</dbReference>
<dbReference type="InterPro" id="IPR030048">
    <property type="entry name" value="SurE"/>
</dbReference>
<dbReference type="InterPro" id="IPR002828">
    <property type="entry name" value="SurE-like_Pase/nucleotidase"/>
</dbReference>
<dbReference type="InterPro" id="IPR036523">
    <property type="entry name" value="SurE-like_sf"/>
</dbReference>
<dbReference type="NCBIfam" id="NF001488">
    <property type="entry name" value="PRK00346.1-1"/>
    <property type="match status" value="1"/>
</dbReference>
<dbReference type="NCBIfam" id="NF001489">
    <property type="entry name" value="PRK00346.1-3"/>
    <property type="match status" value="1"/>
</dbReference>
<dbReference type="NCBIfam" id="NF001490">
    <property type="entry name" value="PRK00346.1-4"/>
    <property type="match status" value="1"/>
</dbReference>
<dbReference type="NCBIfam" id="TIGR00087">
    <property type="entry name" value="surE"/>
    <property type="match status" value="1"/>
</dbReference>
<dbReference type="PANTHER" id="PTHR30457">
    <property type="entry name" value="5'-NUCLEOTIDASE SURE"/>
    <property type="match status" value="1"/>
</dbReference>
<dbReference type="PANTHER" id="PTHR30457:SF12">
    <property type="entry name" value="5'_3'-NUCLEOTIDASE SURE"/>
    <property type="match status" value="1"/>
</dbReference>
<dbReference type="Pfam" id="PF01975">
    <property type="entry name" value="SurE"/>
    <property type="match status" value="1"/>
</dbReference>
<dbReference type="SUPFAM" id="SSF64167">
    <property type="entry name" value="SurE-like"/>
    <property type="match status" value="1"/>
</dbReference>
<gene>
    <name evidence="1" type="primary">surE</name>
    <name type="ordered locus">STM2927</name>
</gene>
<organism>
    <name type="scientific">Salmonella typhimurium (strain LT2 / SGSC1412 / ATCC 700720)</name>
    <dbReference type="NCBI Taxonomy" id="99287"/>
    <lineage>
        <taxon>Bacteria</taxon>
        <taxon>Pseudomonadati</taxon>
        <taxon>Pseudomonadota</taxon>
        <taxon>Gammaproteobacteria</taxon>
        <taxon>Enterobacterales</taxon>
        <taxon>Enterobacteriaceae</taxon>
        <taxon>Salmonella</taxon>
    </lineage>
</organism>
<reference key="1">
    <citation type="journal article" date="2001" name="Nature">
        <title>Complete genome sequence of Salmonella enterica serovar Typhimurium LT2.</title>
        <authorList>
            <person name="McClelland M."/>
            <person name="Sanderson K.E."/>
            <person name="Spieth J."/>
            <person name="Clifton S.W."/>
            <person name="Latreille P."/>
            <person name="Courtney L."/>
            <person name="Porwollik S."/>
            <person name="Ali J."/>
            <person name="Dante M."/>
            <person name="Du F."/>
            <person name="Hou S."/>
            <person name="Layman D."/>
            <person name="Leonard S."/>
            <person name="Nguyen C."/>
            <person name="Scott K."/>
            <person name="Holmes A."/>
            <person name="Grewal N."/>
            <person name="Mulvaney E."/>
            <person name="Ryan E."/>
            <person name="Sun H."/>
            <person name="Florea L."/>
            <person name="Miller W."/>
            <person name="Stoneking T."/>
            <person name="Nhan M."/>
            <person name="Waterston R."/>
            <person name="Wilson R.K."/>
        </authorList>
    </citation>
    <scope>NUCLEOTIDE SEQUENCE [LARGE SCALE GENOMIC DNA]</scope>
    <source>
        <strain>LT2 / SGSC1412 / ATCC 700720</strain>
    </source>
</reference>
<evidence type="ECO:0000255" key="1">
    <source>
        <dbReference type="HAMAP-Rule" id="MF_00060"/>
    </source>
</evidence>
<evidence type="ECO:0007829" key="2">
    <source>
        <dbReference type="PDB" id="2V4N"/>
    </source>
</evidence>
<evidence type="ECO:0007829" key="3">
    <source>
        <dbReference type="PDB" id="4XEP"/>
    </source>
</evidence>
<evidence type="ECO:0007829" key="4">
    <source>
        <dbReference type="PDB" id="4XJ7"/>
    </source>
</evidence>
<protein>
    <recommendedName>
        <fullName evidence="1">5'/3'-nucleotidase SurE</fullName>
        <ecNumber evidence="1">3.1.3.5</ecNumber>
        <ecNumber evidence="1">3.1.3.6</ecNumber>
    </recommendedName>
    <alternativeName>
        <fullName evidence="1">Exopolyphosphatase</fullName>
        <ecNumber evidence="1">3.6.1.11</ecNumber>
    </alternativeName>
    <alternativeName>
        <fullName evidence="1">Nucleoside monophosphate phosphohydrolase</fullName>
    </alternativeName>
</protein>
<name>SURE_SALTY</name>
<sequence>MRILLSNDDGVHAPGIQTLAKALREFADVQVVAPDRNRSGASNSLTLESSLRTFTFDNGDIAVQMGTPTDCVYLGVNALMRPRPDIVVSGINAGPNLGDDVIYSGTVAAAMEGRHLGFPALAVSLNGYQHYDTAAAVTCALLRGLSREPLRTGRILNVNVPDLPLAQVKGIRVTRCGSRHPADKVIPQEDPRGNTLYWIGPPGDKYDAGPDTDFAAVDEGYVSVTPLHVDLTAHSAHDVVSDWLDSVGVGTQW</sequence>